<reference evidence="8" key="1">
    <citation type="journal article" date="2009" name="PLoS Biol.">
        <title>Lineage-specific biology revealed by a finished genome assembly of the mouse.</title>
        <authorList>
            <person name="Church D.M."/>
            <person name="Goodstadt L."/>
            <person name="Hillier L.W."/>
            <person name="Zody M.C."/>
            <person name="Goldstein S."/>
            <person name="She X."/>
            <person name="Bult C.J."/>
            <person name="Agarwala R."/>
            <person name="Cherry J.L."/>
            <person name="DiCuccio M."/>
            <person name="Hlavina W."/>
            <person name="Kapustin Y."/>
            <person name="Meric P."/>
            <person name="Maglott D."/>
            <person name="Birtle Z."/>
            <person name="Marques A.C."/>
            <person name="Graves T."/>
            <person name="Zhou S."/>
            <person name="Teague B."/>
            <person name="Potamousis K."/>
            <person name="Churas C."/>
            <person name="Place M."/>
            <person name="Herschleb J."/>
            <person name="Runnheim R."/>
            <person name="Forrest D."/>
            <person name="Amos-Landgraf J."/>
            <person name="Schwartz D.C."/>
            <person name="Cheng Z."/>
            <person name="Lindblad-Toh K."/>
            <person name="Eichler E.E."/>
            <person name="Ponting C.P."/>
        </authorList>
    </citation>
    <scope>NUCLEOTIDE SEQUENCE [LARGE SCALE GENOMIC DNA]</scope>
    <source>
        <strain evidence="8">C57BL/6J</strain>
    </source>
</reference>
<reference key="2">
    <citation type="journal article" date="2021" name="Front. Cell Dev. Biol.">
        <title>Tex13a Optimizes Sperm Motility via Its Potential Roles in mRNA Turnover.</title>
        <authorList>
            <person name="Li Y."/>
            <person name="Mi P."/>
            <person name="Chen X."/>
            <person name="Wu J."/>
            <person name="Liu X."/>
            <person name="Tang Y."/>
            <person name="Cheng J."/>
            <person name="Huang Y."/>
            <person name="Qin W."/>
            <person name="Cheng C.Y."/>
            <person name="Sun F."/>
        </authorList>
    </citation>
    <scope>FUNCTION</scope>
    <scope>INTERACTION WITH CNOT1</scope>
    <scope>DISRUPTION PHENOTYPE</scope>
</reference>
<reference key="3">
    <citation type="journal article" date="2021" name="Mol. Biol. Rep.">
        <title>Analysis of mouse male germ cell-specific or -predominant Tex13 family genes encoding proteins with transcriptional repressor activity.</title>
        <authorList>
            <person name="Kim D."/>
            <person name="Hong S.H."/>
            <person name="Han G."/>
            <person name="Cho C."/>
        </authorList>
    </citation>
    <scope>FUNCTION</scope>
    <scope>DEVELOPMENTAL STAGE</scope>
</reference>
<dbReference type="RefSeq" id="NP_080745.2">
    <property type="nucleotide sequence ID" value="NM_026469.4"/>
</dbReference>
<dbReference type="SMR" id="A2AFS9"/>
<dbReference type="STRING" id="10090.ENSMUSP00000094038"/>
<dbReference type="PhosphoSitePlus" id="A2AFS9"/>
<dbReference type="PaxDb" id="10090-ENSMUSP00000094038"/>
<dbReference type="ProteomicsDB" id="339251"/>
<dbReference type="DNASU" id="67944"/>
<dbReference type="Ensembl" id="ENSMUST00000096314.3">
    <property type="protein sequence ID" value="ENSMUSP00000094038.3"/>
    <property type="gene ID" value="ENSMUSG00000071686.3"/>
</dbReference>
<dbReference type="GeneID" id="67944"/>
<dbReference type="KEGG" id="mmu:67944"/>
<dbReference type="UCSC" id="uc009ujw.1">
    <property type="organism name" value="mouse"/>
</dbReference>
<dbReference type="AGR" id="MGI:1915194"/>
<dbReference type="CTD" id="56157"/>
<dbReference type="MGI" id="MGI:1915194">
    <property type="gene designation" value="Tex13a"/>
</dbReference>
<dbReference type="VEuPathDB" id="HostDB:ENSMUSG00000071686"/>
<dbReference type="eggNOG" id="KOG4198">
    <property type="taxonomic scope" value="Eukaryota"/>
</dbReference>
<dbReference type="GeneTree" id="ENSGT00940000161342"/>
<dbReference type="HOGENOM" id="CLU_736812_0_0_1"/>
<dbReference type="InParanoid" id="A2AFS9"/>
<dbReference type="OMA" id="NYTYWGQ"/>
<dbReference type="OrthoDB" id="448399at2759"/>
<dbReference type="PhylomeDB" id="A2AFS9"/>
<dbReference type="TreeFam" id="TF337208"/>
<dbReference type="BioGRID-ORCS" id="67944">
    <property type="hits" value="3 hits in 75 CRISPR screens"/>
</dbReference>
<dbReference type="Proteomes" id="UP000000589">
    <property type="component" value="Chromosome X"/>
</dbReference>
<dbReference type="RNAct" id="A2AFS9">
    <property type="molecule type" value="protein"/>
</dbReference>
<dbReference type="Bgee" id="ENSMUSG00000071686">
    <property type="expression patterns" value="Expressed in spermatid and 17 other cell types or tissues"/>
</dbReference>
<dbReference type="GO" id="GO:0008270">
    <property type="term" value="F:zinc ion binding"/>
    <property type="evidence" value="ECO:0007669"/>
    <property type="project" value="UniProtKB-KW"/>
</dbReference>
<dbReference type="Gene3D" id="4.10.1060.10">
    <property type="entry name" value="Zinc finger, RanBP2-type"/>
    <property type="match status" value="1"/>
</dbReference>
<dbReference type="InterPro" id="IPR028193">
    <property type="entry name" value="TEX13A-D_N"/>
</dbReference>
<dbReference type="InterPro" id="IPR049534">
    <property type="entry name" value="TEX13A/C/D_Znf"/>
</dbReference>
<dbReference type="InterPro" id="IPR001876">
    <property type="entry name" value="Znf_RanBP2"/>
</dbReference>
<dbReference type="InterPro" id="IPR036443">
    <property type="entry name" value="Znf_RanBP2_sf"/>
</dbReference>
<dbReference type="PANTHER" id="PTHR23111:SF106">
    <property type="entry name" value="TESTIS EXPRESSED 13A"/>
    <property type="match status" value="1"/>
</dbReference>
<dbReference type="PANTHER" id="PTHR23111">
    <property type="entry name" value="ZINC FINGER PROTEIN"/>
    <property type="match status" value="1"/>
</dbReference>
<dbReference type="Pfam" id="PF15186">
    <property type="entry name" value="TEX13"/>
    <property type="match status" value="1"/>
</dbReference>
<dbReference type="Pfam" id="PF20864">
    <property type="entry name" value="Zn_ribbon_TEX13"/>
    <property type="match status" value="1"/>
</dbReference>
<dbReference type="SUPFAM" id="SSF90209">
    <property type="entry name" value="Ran binding protein zinc finger-like"/>
    <property type="match status" value="1"/>
</dbReference>
<dbReference type="PROSITE" id="PS01358">
    <property type="entry name" value="ZF_RANBP2_1"/>
    <property type="match status" value="1"/>
</dbReference>
<dbReference type="PROSITE" id="PS50199">
    <property type="entry name" value="ZF_RANBP2_2"/>
    <property type="match status" value="1"/>
</dbReference>
<keyword id="KW-0175">Coiled coil</keyword>
<keyword id="KW-0433">Leucine-rich repeat</keyword>
<keyword id="KW-0479">Metal-binding</keyword>
<keyword id="KW-1185">Reference proteome</keyword>
<keyword id="KW-0694">RNA-binding</keyword>
<keyword id="KW-0804">Transcription</keyword>
<keyword id="KW-0805">Transcription regulation</keyword>
<keyword id="KW-0862">Zinc</keyword>
<keyword id="KW-0863">Zinc-finger</keyword>
<evidence type="ECO:0000250" key="1">
    <source>
        <dbReference type="UniProtKB" id="Q9BXU3"/>
    </source>
</evidence>
<evidence type="ECO:0000255" key="2"/>
<evidence type="ECO:0000255" key="3">
    <source>
        <dbReference type="PROSITE-ProRule" id="PRU00322"/>
    </source>
</evidence>
<evidence type="ECO:0000269" key="4">
    <source>
    </source>
</evidence>
<evidence type="ECO:0000269" key="5">
    <source>
    </source>
</evidence>
<evidence type="ECO:0000305" key="6"/>
<evidence type="ECO:0000312" key="7">
    <source>
        <dbReference type="MGI" id="MGI:1915194"/>
    </source>
</evidence>
<evidence type="ECO:0000312" key="8">
    <source>
        <dbReference type="Proteomes" id="UP000000589"/>
    </source>
</evidence>
<sequence>MALNPEDLGSGFRHSKVSMFINEQMAKHDKGPDFYLENLSLSWEEVEDKFKVILEDSEVSNEAREACAWGTLALGVRFAHRQGCLQGHGVQWLQDLSSLHKMSALSLSPDLKQLIHQQEMAQKEVALQLQMAQAKLEEVQRERDLLRLKILQAELRALPNAVRPAVAIPPAVVRRGGIRTQWSSTKENLAEWMAAATGRPNERANMSDTALSGTITSPEEVLEDPNGSFMKLLGVMKCKNYPLKRQRLDLRPKKASMCSFSQSLNLRSTVSSEPFIVQLPASFTYSYESPFPAIPTTSQLPTTERQPHVYPYSMASDISHLSDMRIHRGDHQELPKDKRFSAFRRPGDWDCPWCKAVNFSRRENCFHCGKGIWLQNP</sequence>
<accession>A2AFS9</accession>
<name>TX13A_MOUSE</name>
<comment type="function">
    <text evidence="1 4 5">Binds to ssRNA containing the consensus sequence 5'-AGGUAA-3' (By similarity). Plays a role in transcriptional repression (PubMed:33811575). Required for rapid sperm motility and timely degradation of mRNA via its interaction with CNOT1 (PubMed:34733855).</text>
</comment>
<comment type="subunit">
    <text evidence="5">Interacts with CNOT1; the interaction may inhibit CNOT1 binding to mRNA and subsequently CNOT1-mediated mRNA degradation.</text>
</comment>
<comment type="developmental stage">
    <text evidence="4">Expressed from the meiotic and postmeiotic stages of spermatogenesis.</text>
</comment>
<comment type="disruption phenotype">
    <text evidence="5">Mice are fertile with no visible testis phenotype (PubMed:34733855). Mature sperm show a decrease in rapid motility, which includes a decrease in path velocity, track seed, and rapid progression, as well as a decrease in overall sperm concentration (PubMed:34733855). Decrease in mRNA levels of ribosomal components and increase in structural components of the sperm head and tail (PubMed:34733855).</text>
</comment>
<comment type="similarity">
    <text evidence="6">Belongs to the TEX13 family.</text>
</comment>
<gene>
    <name evidence="7" type="primary">Tex13a</name>
</gene>
<proteinExistence type="evidence at protein level"/>
<organism evidence="8">
    <name type="scientific">Mus musculus</name>
    <name type="common">Mouse</name>
    <dbReference type="NCBI Taxonomy" id="10090"/>
    <lineage>
        <taxon>Eukaryota</taxon>
        <taxon>Metazoa</taxon>
        <taxon>Chordata</taxon>
        <taxon>Craniata</taxon>
        <taxon>Vertebrata</taxon>
        <taxon>Euteleostomi</taxon>
        <taxon>Mammalia</taxon>
        <taxon>Eutheria</taxon>
        <taxon>Euarchontoglires</taxon>
        <taxon>Glires</taxon>
        <taxon>Rodentia</taxon>
        <taxon>Myomorpha</taxon>
        <taxon>Muroidea</taxon>
        <taxon>Muridae</taxon>
        <taxon>Murinae</taxon>
        <taxon>Mus</taxon>
        <taxon>Mus</taxon>
    </lineage>
</organism>
<protein>
    <recommendedName>
        <fullName evidence="6">Testis-expressed protein 13A</fullName>
    </recommendedName>
</protein>
<feature type="chain" id="PRO_0000462469" description="Testis-expressed protein 13A">
    <location>
        <begin position="1"/>
        <end position="377"/>
    </location>
</feature>
<feature type="repeat" description="LRR" evidence="2">
    <location>
        <begin position="142"/>
        <end position="165"/>
    </location>
</feature>
<feature type="zinc finger region" description="RanBP2-type" evidence="3">
    <location>
        <begin position="345"/>
        <end position="369"/>
    </location>
</feature>
<feature type="region of interest" description="Required for repression of transcription" evidence="4">
    <location>
        <begin position="92"/>
        <end position="377"/>
    </location>
</feature>
<feature type="coiled-coil region" evidence="2">
    <location>
        <begin position="122"/>
        <end position="156"/>
    </location>
</feature>
<feature type="binding site" evidence="3">
    <location>
        <position position="351"/>
    </location>
    <ligand>
        <name>Zn(2+)</name>
        <dbReference type="ChEBI" id="CHEBI:29105"/>
    </ligand>
</feature>
<feature type="binding site" evidence="3">
    <location>
        <position position="354"/>
    </location>
    <ligand>
        <name>Zn(2+)</name>
        <dbReference type="ChEBI" id="CHEBI:29105"/>
    </ligand>
</feature>
<feature type="binding site" evidence="3">
    <location>
        <position position="365"/>
    </location>
    <ligand>
        <name>Zn(2+)</name>
        <dbReference type="ChEBI" id="CHEBI:29105"/>
    </ligand>
</feature>
<feature type="binding site" evidence="3">
    <location>
        <position position="368"/>
    </location>
    <ligand>
        <name>Zn(2+)</name>
        <dbReference type="ChEBI" id="CHEBI:29105"/>
    </ligand>
</feature>